<keyword id="KW-0147">Chitin-binding</keyword>
<keyword id="KW-1185">Reference proteome</keyword>
<keyword id="KW-0964">Secreted</keyword>
<keyword id="KW-0732">Signal</keyword>
<comment type="function">
    <text evidence="1">Probably interacts with GlcNAc residues. May promote attachment to both epithelial cell surfaces and chitin.</text>
</comment>
<comment type="subcellular location">
    <subcellularLocation>
        <location evidence="1">Secreted</location>
    </subcellularLocation>
</comment>
<comment type="similarity">
    <text evidence="1">Belongs to the GbpA family.</text>
</comment>
<proteinExistence type="inferred from homology"/>
<dbReference type="EMBL" id="CP000021">
    <property type="protein sequence ID" value="AAW87213.1"/>
    <property type="molecule type" value="Genomic_DNA"/>
</dbReference>
<dbReference type="RefSeq" id="WP_011263042.1">
    <property type="nucleotide sequence ID" value="NC_006841.2"/>
</dbReference>
<dbReference type="RefSeq" id="YP_206101.1">
    <property type="nucleotide sequence ID" value="NC_006841.2"/>
</dbReference>
<dbReference type="SMR" id="Q5E183"/>
<dbReference type="STRING" id="312309.VF_A0143"/>
<dbReference type="CAZy" id="AA10">
    <property type="family name" value="Auxiliary Activities 10"/>
</dbReference>
<dbReference type="CAZy" id="CBM73">
    <property type="family name" value="Carbohydrate-Binding Module Family 73"/>
</dbReference>
<dbReference type="EnsemblBacteria" id="AAW87213">
    <property type="protein sequence ID" value="AAW87213"/>
    <property type="gene ID" value="VF_A0143"/>
</dbReference>
<dbReference type="GeneID" id="54165468"/>
<dbReference type="KEGG" id="vfi:VF_A0143"/>
<dbReference type="PATRIC" id="fig|312309.11.peg.2748"/>
<dbReference type="eggNOG" id="COG3397">
    <property type="taxonomic scope" value="Bacteria"/>
</dbReference>
<dbReference type="HOGENOM" id="CLU_039396_2_0_6"/>
<dbReference type="OrthoDB" id="3675244at2"/>
<dbReference type="Proteomes" id="UP000000537">
    <property type="component" value="Chromosome II"/>
</dbReference>
<dbReference type="GO" id="GO:0005576">
    <property type="term" value="C:extracellular region"/>
    <property type="evidence" value="ECO:0007669"/>
    <property type="project" value="UniProtKB-SubCell"/>
</dbReference>
<dbReference type="GO" id="GO:0008061">
    <property type="term" value="F:chitin binding"/>
    <property type="evidence" value="ECO:0007669"/>
    <property type="project" value="UniProtKB-UniRule"/>
</dbReference>
<dbReference type="CDD" id="cd21177">
    <property type="entry name" value="LPMO_AA10"/>
    <property type="match status" value="1"/>
</dbReference>
<dbReference type="Gene3D" id="2.60.40.2550">
    <property type="match status" value="1"/>
</dbReference>
<dbReference type="Gene3D" id="3.30.70.2150">
    <property type="match status" value="1"/>
</dbReference>
<dbReference type="Gene3D" id="2.70.50.50">
    <property type="entry name" value="chitin-binding protein cbp21"/>
    <property type="match status" value="1"/>
</dbReference>
<dbReference type="HAMAP" id="MF_01905">
    <property type="entry name" value="GbpA"/>
    <property type="match status" value="1"/>
</dbReference>
<dbReference type="InterPro" id="IPR004302">
    <property type="entry name" value="Cellulose/chitin-bd_N"/>
</dbReference>
<dbReference type="InterPro" id="IPR041029">
    <property type="entry name" value="GbpA_2"/>
</dbReference>
<dbReference type="InterPro" id="IPR054063">
    <property type="entry name" value="GbpA_D3"/>
</dbReference>
<dbReference type="InterPro" id="IPR020879">
    <property type="entry name" value="GlcNAc-bd_A"/>
</dbReference>
<dbReference type="InterPro" id="IPR051024">
    <property type="entry name" value="GlcNAc_Chitin_IntDeg"/>
</dbReference>
<dbReference type="InterPro" id="IPR014756">
    <property type="entry name" value="Ig_E-set"/>
</dbReference>
<dbReference type="NCBIfam" id="NF009690">
    <property type="entry name" value="PRK13211.1"/>
    <property type="match status" value="1"/>
</dbReference>
<dbReference type="PANTHER" id="PTHR34823:SF1">
    <property type="entry name" value="CHITIN-BINDING TYPE-4 DOMAIN-CONTAINING PROTEIN"/>
    <property type="match status" value="1"/>
</dbReference>
<dbReference type="PANTHER" id="PTHR34823">
    <property type="entry name" value="GLCNAC-BINDING PROTEIN A"/>
    <property type="match status" value="1"/>
</dbReference>
<dbReference type="Pfam" id="PF18416">
    <property type="entry name" value="GbpA_2"/>
    <property type="match status" value="1"/>
</dbReference>
<dbReference type="Pfam" id="PF21868">
    <property type="entry name" value="GbpA_D3"/>
    <property type="match status" value="1"/>
</dbReference>
<dbReference type="Pfam" id="PF03067">
    <property type="entry name" value="LPMO_10"/>
    <property type="match status" value="1"/>
</dbReference>
<dbReference type="SUPFAM" id="SSF81296">
    <property type="entry name" value="E set domains"/>
    <property type="match status" value="1"/>
</dbReference>
<evidence type="ECO:0000255" key="1">
    <source>
        <dbReference type="HAMAP-Rule" id="MF_01905"/>
    </source>
</evidence>
<accession>Q5E183</accession>
<name>GBPA_ALIF1</name>
<sequence>MNKSSTKTLIALSMMAVSSGVSAHGYVSETNDGIAGSRAALCKFPTSDTQEKNRDCGAVQWEPQSVEGPEGFPEKGPADGQIAGAGLVQFSELNEQTADRWVKRPITAGAQTFEWTFTANHVTRTWKYYMTKQNWNPNAVLTRDSFDLTPFCELEYNMEKPPLYPNTFSHECIVPEREGYQVILAVWDVGDTAAAFYNVIDVKFDGNGGVVDPTWSQGGQINPTRDLNVGDRVFTRVFDTSGENASLSTELVIENETQGQANNWTHALATKINKEQQNIGAGQLNDKGEFSPQYGSNPVYLKAGSGLKSVEIGYQLETVEPVYHLDIEGLASEYTIGDSATELDLSLYATGDMNVELTVYNHGKEALANTNVTLKDGEAKSVVMALSKSEKGHHMLVSRIKNMDGELIKQDMSDFHLVEEAVTPPPSGDFDFVFPEGVKGYKAGTKVLAEDGNVYQCKEFPYSGYCVQWTETATNFAPGVGSDWSMAWDKVN</sequence>
<protein>
    <recommendedName>
        <fullName evidence="1">GlcNAc-binding protein A</fullName>
    </recommendedName>
</protein>
<organism>
    <name type="scientific">Aliivibrio fischeri (strain ATCC 700601 / ES114)</name>
    <name type="common">Vibrio fischeri</name>
    <dbReference type="NCBI Taxonomy" id="312309"/>
    <lineage>
        <taxon>Bacteria</taxon>
        <taxon>Pseudomonadati</taxon>
        <taxon>Pseudomonadota</taxon>
        <taxon>Gammaproteobacteria</taxon>
        <taxon>Vibrionales</taxon>
        <taxon>Vibrionaceae</taxon>
        <taxon>Aliivibrio</taxon>
    </lineage>
</organism>
<gene>
    <name evidence="1" type="primary">gbpA</name>
    <name type="ordered locus">VF_A0143</name>
</gene>
<reference key="1">
    <citation type="journal article" date="2005" name="Proc. Natl. Acad. Sci. U.S.A.">
        <title>Complete genome sequence of Vibrio fischeri: a symbiotic bacterium with pathogenic congeners.</title>
        <authorList>
            <person name="Ruby E.G."/>
            <person name="Urbanowski M."/>
            <person name="Campbell J."/>
            <person name="Dunn A."/>
            <person name="Faini M."/>
            <person name="Gunsalus R."/>
            <person name="Lostroh P."/>
            <person name="Lupp C."/>
            <person name="McCann J."/>
            <person name="Millikan D."/>
            <person name="Schaefer A."/>
            <person name="Stabb E."/>
            <person name="Stevens A."/>
            <person name="Visick K."/>
            <person name="Whistler C."/>
            <person name="Greenberg E.P."/>
        </authorList>
    </citation>
    <scope>NUCLEOTIDE SEQUENCE [LARGE SCALE GENOMIC DNA]</scope>
    <source>
        <strain>ATCC 700601 / ES114</strain>
    </source>
</reference>
<feature type="signal peptide" evidence="1">
    <location>
        <begin position="1"/>
        <end position="23"/>
    </location>
</feature>
<feature type="chain" id="PRO_0000229724" description="GlcNAc-binding protein A">
    <location>
        <begin position="24"/>
        <end position="492"/>
    </location>
</feature>
<feature type="domain" description="Chitin-binding type-4" evidence="1">
    <location>
        <begin position="24"/>
        <end position="204"/>
    </location>
</feature>
<feature type="domain" description="Chitin-binding type-3" evidence="1">
    <location>
        <begin position="443"/>
        <end position="484"/>
    </location>
</feature>